<proteinExistence type="evidence at transcript level"/>
<evidence type="ECO:0000255" key="1"/>
<evidence type="ECO:0000255" key="2">
    <source>
        <dbReference type="PROSITE-ProRule" id="PRU00084"/>
    </source>
</evidence>
<evidence type="ECO:0000255" key="3">
    <source>
        <dbReference type="PROSITE-ProRule" id="PRU00145"/>
    </source>
</evidence>
<evidence type="ECO:0000255" key="4">
    <source>
        <dbReference type="PROSITE-ProRule" id="PRU00359"/>
    </source>
</evidence>
<evidence type="ECO:0000256" key="5">
    <source>
        <dbReference type="SAM" id="MobiDB-lite"/>
    </source>
</evidence>
<evidence type="ECO:0000269" key="6">
    <source>
    </source>
</evidence>
<comment type="function">
    <text evidence="6">Critical component of the guidance pathway underlying endothelial cell migration and blood vessel patterning. Involved in mediating membrane localization of ephrin proteins, which have been shown to provide guidance cues for endothelial cell migration.</text>
</comment>
<comment type="developmental stage">
    <text evidence="6">Specifically expressed in subsets of neuronal tissues, epithelial cells, and developing somites through which vascular endothelial cells migrate from large ventral axial vessels to form stereotypic intersegmental blood vessels (ISV).</text>
</comment>
<feature type="chain" id="PRO_0000310950" description="Pleckstrin homology domain-containing family H member 1">
    <location>
        <begin position="1"/>
        <end position="1433"/>
    </location>
</feature>
<feature type="domain" description="PH 1" evidence="3">
    <location>
        <begin position="643"/>
        <end position="737"/>
    </location>
</feature>
<feature type="domain" description="PH 2" evidence="3">
    <location>
        <begin position="751"/>
        <end position="859"/>
    </location>
</feature>
<feature type="domain" description="MyTH4" evidence="4">
    <location>
        <begin position="896"/>
        <end position="1050"/>
    </location>
</feature>
<feature type="domain" description="FERM" evidence="2">
    <location>
        <begin position="1061"/>
        <end position="1392"/>
    </location>
</feature>
<feature type="region of interest" description="Disordered" evidence="5">
    <location>
        <begin position="247"/>
        <end position="346"/>
    </location>
</feature>
<feature type="region of interest" description="Disordered" evidence="5">
    <location>
        <begin position="552"/>
        <end position="634"/>
    </location>
</feature>
<feature type="coiled-coil region" evidence="1">
    <location>
        <begin position="40"/>
        <end position="174"/>
    </location>
</feature>
<feature type="compositionally biased region" description="Polar residues" evidence="5">
    <location>
        <begin position="252"/>
        <end position="266"/>
    </location>
</feature>
<feature type="compositionally biased region" description="Basic and acidic residues" evidence="5">
    <location>
        <begin position="279"/>
        <end position="299"/>
    </location>
</feature>
<feature type="compositionally biased region" description="Low complexity" evidence="5">
    <location>
        <begin position="308"/>
        <end position="318"/>
    </location>
</feature>
<feature type="compositionally biased region" description="Pro residues" evidence="5">
    <location>
        <begin position="332"/>
        <end position="343"/>
    </location>
</feature>
<feature type="compositionally biased region" description="Acidic residues" evidence="5">
    <location>
        <begin position="557"/>
        <end position="567"/>
    </location>
</feature>
<feature type="compositionally biased region" description="Low complexity" evidence="5">
    <location>
        <begin position="568"/>
        <end position="578"/>
    </location>
</feature>
<feature type="compositionally biased region" description="Polar residues" evidence="5">
    <location>
        <begin position="597"/>
        <end position="606"/>
    </location>
</feature>
<accession>Q00IB7</accession>
<gene>
    <name type="primary">plekhh1</name>
    <name type="synonym">max1</name>
</gene>
<keyword id="KW-0175">Coiled coil</keyword>
<keyword id="KW-0217">Developmental protein</keyword>
<keyword id="KW-1185">Reference proteome</keyword>
<keyword id="KW-0677">Repeat</keyword>
<organism>
    <name type="scientific">Danio rerio</name>
    <name type="common">Zebrafish</name>
    <name type="synonym">Brachydanio rerio</name>
    <dbReference type="NCBI Taxonomy" id="7955"/>
    <lineage>
        <taxon>Eukaryota</taxon>
        <taxon>Metazoa</taxon>
        <taxon>Chordata</taxon>
        <taxon>Craniata</taxon>
        <taxon>Vertebrata</taxon>
        <taxon>Euteleostomi</taxon>
        <taxon>Actinopterygii</taxon>
        <taxon>Neopterygii</taxon>
        <taxon>Teleostei</taxon>
        <taxon>Ostariophysi</taxon>
        <taxon>Cypriniformes</taxon>
        <taxon>Danionidae</taxon>
        <taxon>Danioninae</taxon>
        <taxon>Danio</taxon>
    </lineage>
</organism>
<protein>
    <recommendedName>
        <fullName>Pleckstrin homology domain-containing family H member 1</fullName>
        <shortName>PH domain-containing family H member 1</shortName>
    </recommendedName>
    <alternativeName>
        <fullName>Protein max-1 homolog</fullName>
    </alternativeName>
</protein>
<dbReference type="EMBL" id="DQ501275">
    <property type="protein sequence ID" value="ABI31621.1"/>
    <property type="molecule type" value="mRNA"/>
</dbReference>
<dbReference type="RefSeq" id="NP_001070987.1">
    <property type="nucleotide sequence ID" value="NM_001077519.2"/>
</dbReference>
<dbReference type="SMR" id="Q00IB7"/>
<dbReference type="FunCoup" id="Q00IB7">
    <property type="interactions" value="1236"/>
</dbReference>
<dbReference type="STRING" id="7955.ENSDARP00000070420"/>
<dbReference type="PaxDb" id="7955-ENSDARP00000070420"/>
<dbReference type="GeneID" id="565914"/>
<dbReference type="KEGG" id="dre:565914"/>
<dbReference type="AGR" id="ZFIN:ZDB-GENE-061219-1"/>
<dbReference type="CTD" id="57475"/>
<dbReference type="ZFIN" id="ZDB-GENE-061219-1">
    <property type="gene designation" value="plekhh1"/>
</dbReference>
<dbReference type="eggNOG" id="KOG0248">
    <property type="taxonomic scope" value="Eukaryota"/>
</dbReference>
<dbReference type="InParanoid" id="Q00IB7"/>
<dbReference type="OrthoDB" id="6285196at2759"/>
<dbReference type="PhylomeDB" id="Q00IB7"/>
<dbReference type="PRO" id="PR:Q00IB7"/>
<dbReference type="Proteomes" id="UP000000437">
    <property type="component" value="Chromosome 17"/>
</dbReference>
<dbReference type="GO" id="GO:0005856">
    <property type="term" value="C:cytoskeleton"/>
    <property type="evidence" value="ECO:0007669"/>
    <property type="project" value="InterPro"/>
</dbReference>
<dbReference type="GO" id="GO:0048514">
    <property type="term" value="P:blood vessel morphogenesis"/>
    <property type="evidence" value="ECO:0000315"/>
    <property type="project" value="ZFIN"/>
</dbReference>
<dbReference type="GO" id="GO:0001569">
    <property type="term" value="P:branching involved in blood vessel morphogenesis"/>
    <property type="evidence" value="ECO:0000315"/>
    <property type="project" value="ZFIN"/>
</dbReference>
<dbReference type="CDD" id="cd14473">
    <property type="entry name" value="FERM_B-lobe"/>
    <property type="match status" value="1"/>
</dbReference>
<dbReference type="CDD" id="cd13206">
    <property type="entry name" value="FERM_C-lobe_PLEKHH1_PLEKHH2"/>
    <property type="match status" value="1"/>
</dbReference>
<dbReference type="CDD" id="cd17178">
    <property type="entry name" value="FERM_F1_PLEKHH1"/>
    <property type="match status" value="1"/>
</dbReference>
<dbReference type="CDD" id="cd13282">
    <property type="entry name" value="PH1_PLEKHH1_PLEKHH2"/>
    <property type="match status" value="1"/>
</dbReference>
<dbReference type="FunFam" id="2.30.29.30:FF:000335">
    <property type="entry name" value="Pleckstrin homology domain-containing family H member 2"/>
    <property type="match status" value="1"/>
</dbReference>
<dbReference type="Gene3D" id="1.20.80.10">
    <property type="match status" value="1"/>
</dbReference>
<dbReference type="Gene3D" id="1.25.40.530">
    <property type="entry name" value="MyTH4 domain"/>
    <property type="match status" value="1"/>
</dbReference>
<dbReference type="Gene3D" id="3.10.20.90">
    <property type="entry name" value="Phosphatidylinositol 3-kinase Catalytic Subunit, Chain A, domain 1"/>
    <property type="match status" value="1"/>
</dbReference>
<dbReference type="Gene3D" id="2.30.29.30">
    <property type="entry name" value="Pleckstrin-homology domain (PH domain)/Phosphotyrosine-binding domain (PTB)"/>
    <property type="match status" value="3"/>
</dbReference>
<dbReference type="InterPro" id="IPR019749">
    <property type="entry name" value="Band_41_domain"/>
</dbReference>
<dbReference type="InterPro" id="IPR014352">
    <property type="entry name" value="FERM/acyl-CoA-bd_prot_sf"/>
</dbReference>
<dbReference type="InterPro" id="IPR035963">
    <property type="entry name" value="FERM_2"/>
</dbReference>
<dbReference type="InterPro" id="IPR019748">
    <property type="entry name" value="FERM_central"/>
</dbReference>
<dbReference type="InterPro" id="IPR000299">
    <property type="entry name" value="FERM_domain"/>
</dbReference>
<dbReference type="InterPro" id="IPR000857">
    <property type="entry name" value="MyTH4_dom"/>
</dbReference>
<dbReference type="InterPro" id="IPR038185">
    <property type="entry name" value="MyTH4_dom_sf"/>
</dbReference>
<dbReference type="InterPro" id="IPR011993">
    <property type="entry name" value="PH-like_dom_sf"/>
</dbReference>
<dbReference type="InterPro" id="IPR001849">
    <property type="entry name" value="PH_domain"/>
</dbReference>
<dbReference type="InterPro" id="IPR029071">
    <property type="entry name" value="Ubiquitin-like_domsf"/>
</dbReference>
<dbReference type="PANTHER" id="PTHR22903:SF4">
    <property type="entry name" value="PLECKSTRIN HOMOLOGY DOMAIN-CONTAINING FAMILY H MEMBER 1"/>
    <property type="match status" value="1"/>
</dbReference>
<dbReference type="PANTHER" id="PTHR22903">
    <property type="entry name" value="PLEKHH PROTEIN"/>
    <property type="match status" value="1"/>
</dbReference>
<dbReference type="Pfam" id="PF00373">
    <property type="entry name" value="FERM_M"/>
    <property type="match status" value="1"/>
</dbReference>
<dbReference type="Pfam" id="PF00784">
    <property type="entry name" value="MyTH4"/>
    <property type="match status" value="1"/>
</dbReference>
<dbReference type="Pfam" id="PF00169">
    <property type="entry name" value="PH"/>
    <property type="match status" value="1"/>
</dbReference>
<dbReference type="Pfam" id="PF21989">
    <property type="entry name" value="RA_2"/>
    <property type="match status" value="1"/>
</dbReference>
<dbReference type="SMART" id="SM00295">
    <property type="entry name" value="B41"/>
    <property type="match status" value="1"/>
</dbReference>
<dbReference type="SMART" id="SM00139">
    <property type="entry name" value="MyTH4"/>
    <property type="match status" value="1"/>
</dbReference>
<dbReference type="SMART" id="SM00233">
    <property type="entry name" value="PH"/>
    <property type="match status" value="2"/>
</dbReference>
<dbReference type="SUPFAM" id="SSF50729">
    <property type="entry name" value="PH domain-like"/>
    <property type="match status" value="2"/>
</dbReference>
<dbReference type="SUPFAM" id="SSF47031">
    <property type="entry name" value="Second domain of FERM"/>
    <property type="match status" value="1"/>
</dbReference>
<dbReference type="SUPFAM" id="SSF54236">
    <property type="entry name" value="Ubiquitin-like"/>
    <property type="match status" value="1"/>
</dbReference>
<dbReference type="PROSITE" id="PS50057">
    <property type="entry name" value="FERM_3"/>
    <property type="match status" value="1"/>
</dbReference>
<dbReference type="PROSITE" id="PS51016">
    <property type="entry name" value="MYTH4"/>
    <property type="match status" value="1"/>
</dbReference>
<dbReference type="PROSITE" id="PS50003">
    <property type="entry name" value="PH_DOMAIN"/>
    <property type="match status" value="2"/>
</dbReference>
<sequence>MAEVMESVSTAVVPNSSVDWQKRCIALETQLMRFRLQAGNIRHLLAERMQELEQRVIEADQRAESAEKQVHIMEEKLKSANMQPSETENSLYRSYQELSNQIQEKDLIVKRLEGQLEKQNLVRAQEAEIIEEKAAKIKDWVTFKLREMETENQQLKKANLKQTEQILMLQDKLQTLLERPMSPAVDTHLVPSSPLHPPSCPGTPPAQEDCWRLPGCRLNSSADSKRKITEGCDSAFHSASLLPMLQDKADSPKSSQDGVDATSTVKESAEGVEPSFGVMRDRAMGGASDRDHSSDELNSKFRSQCLRSSSSSSSSSSSAYETPGPGGFDTPTPTPKSPPPVSLSPPLTRLPLSCPFPLALPLGTSMTLPKVRTPLTPRDSIQLVKKHHSQPQPGLERLHQVNVSIDIGNCGSPSCHSLVPGSAPSHGLEETDIDEGTPESMEVVVEGSEITEAQPNDGDLLDGLTKELEMMDPEALKPPTPPLHRFPSWESRIYAVAKLGMRVSEACLGAKTIGRVSTQPQHSTTGPFTHLIYKNISVPVYSTLKGKATQISSVPLPDDDSGSEDDSSSLASLHTSTLGPDKKGSTPGSPRAVKRGVSTSSISSESDYAIPPDAYSLDSDCSEPEHKVQRTSSYSCESVGPETLEKTGYLLKMGSQVKAWKRRWFILRNGEILYYKSPSDVIRKPQGQMELNSSCHIARGEGAQTFQLITEKKTFYLAADSPNILEDWIRVLQNVLKVQASGPISMDKEVKPTARGWLTKVKHGHSKLVWCALIGKVFYYYRNQEDKFPLGQLRVREARVEEVDRSCDSDEDYEAGGRGFLSSHFTLVVHPKEQSPTYLLVGTKQEKDTWLYHLTVAAGSSASLRVGTEFEQLIGKLLDVDGVSDSALWKREVLCFSKEGLRYPLTTLPSEALQTEAIKLFKSCQLFINVLVESPSIDYHTSLAQNALQVCLTHPELQNEMYCQLIKQTNCRTPHNYALTQCWQLLSLCVALFLPQHHFLWYLRQYLQRNADPRTEVGKYAVYCQRSVERTLQNGEREAKPSRMEILSILLRNPYHHSLPFSIPVHFMNNTYEVVGFDGSTTVEEFLNTVNQRTGMRKPQISGFALFTDDPSGKDLEHCLQPANKICDVISKWEQALKELHPGKYEGTRTVRLTYKSRLCFRAQAKGETERERLLLAYQVNDEVLQGHFPVSKELALEVAALMAQVEYGDLDRAAMSPVGSPQPKTQQTLLQVLERFYPKRYKQECSVEQLRELGERLVATKWSVLRGCTASECVRIYLTVARKWPLFGAKLFNAKPLPPSSLDRTQVWLAVNEDGLSVLDYTMYPLVTYPYQSVITFGGCKEDFMLVVSLIKDQALGKKTVDKLLFAMAKPKILELTLLIASYINYWTSSLPGASNQTQSSTLGAQGDKKLWDIDSRHFPSMTYTTKGPTLL</sequence>
<reference key="1">
    <citation type="journal article" date="2006" name="Proc. Natl. Acad. Sci. U.S.A.">
        <title>Vertebrate MAX-1 is required for vascular patterning in zebrafish.</title>
        <authorList>
            <person name="Zhong H."/>
            <person name="Wu X."/>
            <person name="Huang H."/>
            <person name="Fan Q."/>
            <person name="Zhu Z."/>
            <person name="Lin S."/>
        </authorList>
    </citation>
    <scope>NUCLEOTIDE SEQUENCE [LARGE SCALE MRNA]</scope>
    <scope>FUNCTION</scope>
    <scope>DEVELOPMENTAL STAGE</scope>
    <source>
        <tissue>Kidney marrow</tissue>
    </source>
</reference>
<name>PKHH1_DANRE</name>